<keyword id="KW-0413">Isomerase</keyword>
<protein>
    <recommendedName>
        <fullName evidence="1">Uronate isomerase</fullName>
        <ecNumber evidence="1">5.3.1.12</ecNumber>
    </recommendedName>
    <alternativeName>
        <fullName evidence="1">Glucuronate isomerase</fullName>
    </alternativeName>
    <alternativeName>
        <fullName evidence="1">Uronic isomerase</fullName>
    </alternativeName>
</protein>
<accession>B7ND80</accession>
<comment type="catalytic activity">
    <reaction evidence="1">
        <text>D-glucuronate = D-fructuronate</text>
        <dbReference type="Rhea" id="RHEA:13049"/>
        <dbReference type="ChEBI" id="CHEBI:58720"/>
        <dbReference type="ChEBI" id="CHEBI:59863"/>
        <dbReference type="EC" id="5.3.1.12"/>
    </reaction>
</comment>
<comment type="catalytic activity">
    <reaction evidence="1">
        <text>aldehydo-D-galacturonate = keto-D-tagaturonate</text>
        <dbReference type="Rhea" id="RHEA:27702"/>
        <dbReference type="ChEBI" id="CHEBI:12952"/>
        <dbReference type="ChEBI" id="CHEBI:17886"/>
        <dbReference type="EC" id="5.3.1.12"/>
    </reaction>
</comment>
<comment type="pathway">
    <text evidence="1">Carbohydrate metabolism; pentose and glucuronate interconversion.</text>
</comment>
<comment type="similarity">
    <text evidence="1">Belongs to the metallo-dependent hydrolases superfamily. Uronate isomerase family.</text>
</comment>
<sequence>MTPFMTEDFLLDTEFARRLYHDYAKDQPIFDYHCHLPPQQIAEDYRFKNLYDIWLKGDHYKWRAMRTNGVAERLCTGDASDREKFDAWAATVPHTIGNPLYHWTHLELRRPFGITGKLLSPSTADEIWNECNELLAQDNFSARGIMQQMNVKMVGTTDDPIDSLEHHAEIAKDGSFTIKVLPSWRPDKAFNIEQATFNDYMAKLGEVSDTDIRRFADLQTALTKRLDHFAAHGCKVSDHALDVVMFAEANEAELDRILARRLAGETLSEHEVAQFKTAVLVFLGAEYARRGWVQQYHIGALRNNNLRQFKLLGPDVGFDSINDRPMAEELSKLLSKQNEENLLPKTILYCLNPRDNEVLGTMIGNFQGEGMPGKMQFGSGWWFNDQKDGMERQMTQLAQLGLLSRFVGMLTDSRSFLSYTRHEYFRRILCQMIGRWVEAGEAPADINLLGEMVKNICFNNARDYFAIELN</sequence>
<evidence type="ECO:0000255" key="1">
    <source>
        <dbReference type="HAMAP-Rule" id="MF_00675"/>
    </source>
</evidence>
<gene>
    <name evidence="1" type="primary">uxaC</name>
    <name type="ordered locus">ECUMN_3576</name>
</gene>
<name>UXAC_ECOLU</name>
<reference key="1">
    <citation type="journal article" date="2009" name="PLoS Genet.">
        <title>Organised genome dynamics in the Escherichia coli species results in highly diverse adaptive paths.</title>
        <authorList>
            <person name="Touchon M."/>
            <person name="Hoede C."/>
            <person name="Tenaillon O."/>
            <person name="Barbe V."/>
            <person name="Baeriswyl S."/>
            <person name="Bidet P."/>
            <person name="Bingen E."/>
            <person name="Bonacorsi S."/>
            <person name="Bouchier C."/>
            <person name="Bouvet O."/>
            <person name="Calteau A."/>
            <person name="Chiapello H."/>
            <person name="Clermont O."/>
            <person name="Cruveiller S."/>
            <person name="Danchin A."/>
            <person name="Diard M."/>
            <person name="Dossat C."/>
            <person name="Karoui M.E."/>
            <person name="Frapy E."/>
            <person name="Garry L."/>
            <person name="Ghigo J.M."/>
            <person name="Gilles A.M."/>
            <person name="Johnson J."/>
            <person name="Le Bouguenec C."/>
            <person name="Lescat M."/>
            <person name="Mangenot S."/>
            <person name="Martinez-Jehanne V."/>
            <person name="Matic I."/>
            <person name="Nassif X."/>
            <person name="Oztas S."/>
            <person name="Petit M.A."/>
            <person name="Pichon C."/>
            <person name="Rouy Z."/>
            <person name="Ruf C.S."/>
            <person name="Schneider D."/>
            <person name="Tourret J."/>
            <person name="Vacherie B."/>
            <person name="Vallenet D."/>
            <person name="Medigue C."/>
            <person name="Rocha E.P.C."/>
            <person name="Denamur E."/>
        </authorList>
    </citation>
    <scope>NUCLEOTIDE SEQUENCE [LARGE SCALE GENOMIC DNA]</scope>
    <source>
        <strain>UMN026 / ExPEC</strain>
    </source>
</reference>
<proteinExistence type="inferred from homology"/>
<organism>
    <name type="scientific">Escherichia coli O17:K52:H18 (strain UMN026 / ExPEC)</name>
    <dbReference type="NCBI Taxonomy" id="585056"/>
    <lineage>
        <taxon>Bacteria</taxon>
        <taxon>Pseudomonadati</taxon>
        <taxon>Pseudomonadota</taxon>
        <taxon>Gammaproteobacteria</taxon>
        <taxon>Enterobacterales</taxon>
        <taxon>Enterobacteriaceae</taxon>
        <taxon>Escherichia</taxon>
    </lineage>
</organism>
<dbReference type="EC" id="5.3.1.12" evidence="1"/>
<dbReference type="EMBL" id="CU928163">
    <property type="protein sequence ID" value="CAR14730.1"/>
    <property type="molecule type" value="Genomic_DNA"/>
</dbReference>
<dbReference type="RefSeq" id="WP_000187438.1">
    <property type="nucleotide sequence ID" value="NC_011751.1"/>
</dbReference>
<dbReference type="RefSeq" id="YP_002414235.1">
    <property type="nucleotide sequence ID" value="NC_011751.1"/>
</dbReference>
<dbReference type="SMR" id="B7ND80"/>
<dbReference type="STRING" id="585056.ECUMN_3576"/>
<dbReference type="KEGG" id="eum:ECUMN_3576"/>
<dbReference type="PATRIC" id="fig|585056.7.peg.3752"/>
<dbReference type="HOGENOM" id="CLU_044465_1_0_6"/>
<dbReference type="UniPathway" id="UPA00246"/>
<dbReference type="Proteomes" id="UP000007097">
    <property type="component" value="Chromosome"/>
</dbReference>
<dbReference type="GO" id="GO:0008880">
    <property type="term" value="F:glucuronate isomerase activity"/>
    <property type="evidence" value="ECO:0007669"/>
    <property type="project" value="UniProtKB-UniRule"/>
</dbReference>
<dbReference type="GO" id="GO:0019698">
    <property type="term" value="P:D-galacturonate catabolic process"/>
    <property type="evidence" value="ECO:0007669"/>
    <property type="project" value="TreeGrafter"/>
</dbReference>
<dbReference type="GO" id="GO:0042840">
    <property type="term" value="P:D-glucuronate catabolic process"/>
    <property type="evidence" value="ECO:0007669"/>
    <property type="project" value="TreeGrafter"/>
</dbReference>
<dbReference type="FunFam" id="1.10.2020.10:FF:000001">
    <property type="entry name" value="Uronate isomerase"/>
    <property type="match status" value="1"/>
</dbReference>
<dbReference type="Gene3D" id="3.20.20.140">
    <property type="entry name" value="Metal-dependent hydrolases"/>
    <property type="match status" value="1"/>
</dbReference>
<dbReference type="Gene3D" id="1.10.2020.10">
    <property type="entry name" value="uronate isomerase, domain 2, chain A"/>
    <property type="match status" value="1"/>
</dbReference>
<dbReference type="HAMAP" id="MF_00675">
    <property type="entry name" value="UxaC"/>
    <property type="match status" value="1"/>
</dbReference>
<dbReference type="InterPro" id="IPR032466">
    <property type="entry name" value="Metal_Hydrolase"/>
</dbReference>
<dbReference type="InterPro" id="IPR003766">
    <property type="entry name" value="Uronate_isomerase"/>
</dbReference>
<dbReference type="NCBIfam" id="NF002794">
    <property type="entry name" value="PRK02925.1"/>
    <property type="match status" value="1"/>
</dbReference>
<dbReference type="PANTHER" id="PTHR30068">
    <property type="entry name" value="URONATE ISOMERASE"/>
    <property type="match status" value="1"/>
</dbReference>
<dbReference type="PANTHER" id="PTHR30068:SF4">
    <property type="entry name" value="URONATE ISOMERASE"/>
    <property type="match status" value="1"/>
</dbReference>
<dbReference type="Pfam" id="PF02614">
    <property type="entry name" value="UxaC"/>
    <property type="match status" value="1"/>
</dbReference>
<dbReference type="SUPFAM" id="SSF51556">
    <property type="entry name" value="Metallo-dependent hydrolases"/>
    <property type="match status" value="1"/>
</dbReference>
<feature type="chain" id="PRO_1000131593" description="Uronate isomerase">
    <location>
        <begin position="1"/>
        <end position="470"/>
    </location>
</feature>